<name>WFGD_ECOLX</name>
<evidence type="ECO:0000269" key="1">
    <source>
    </source>
</evidence>
<evidence type="ECO:0000305" key="2"/>
<proteinExistence type="evidence at protein level"/>
<organism>
    <name type="scientific">Escherichia coli</name>
    <dbReference type="NCBI Taxonomy" id="562"/>
    <lineage>
        <taxon>Bacteria</taxon>
        <taxon>Pseudomonadati</taxon>
        <taxon>Pseudomonadota</taxon>
        <taxon>Gammaproteobacteria</taxon>
        <taxon>Enterobacterales</taxon>
        <taxon>Enterobacteriaceae</taxon>
        <taxon>Escherichia</taxon>
    </lineage>
</organism>
<gene>
    <name type="primary">wfgD</name>
</gene>
<accession>B5L3F2</accession>
<feature type="chain" id="PRO_0000424178" description="UDP-Glc:alpha-D-GlcNAc-diphosphoundecaprenol beta-1,3-glucosyltransferase WfgD">
    <location>
        <begin position="1"/>
        <end position="253"/>
    </location>
</feature>
<dbReference type="EC" id="2.4.1.305"/>
<dbReference type="EMBL" id="EU294170">
    <property type="protein sequence ID" value="ACA24822.1"/>
    <property type="molecule type" value="Genomic_DNA"/>
</dbReference>
<dbReference type="RefSeq" id="WP_040089049.1">
    <property type="nucleotide sequence ID" value="NZ_CP053259.1"/>
</dbReference>
<dbReference type="SMR" id="B5L3F2"/>
<dbReference type="CAZy" id="GT2">
    <property type="family name" value="Glycosyltransferase Family 2"/>
</dbReference>
<dbReference type="KEGG" id="ag:ACA24822"/>
<dbReference type="BioCyc" id="MetaCyc:MONOMER-21555"/>
<dbReference type="BRENDA" id="2.4.1.305">
    <property type="organism ID" value="2026"/>
</dbReference>
<dbReference type="UniPathway" id="UPA00030"/>
<dbReference type="GO" id="GO:0005886">
    <property type="term" value="C:plasma membrane"/>
    <property type="evidence" value="ECO:0007669"/>
    <property type="project" value="UniProtKB-SubCell"/>
</dbReference>
<dbReference type="GO" id="GO:0016758">
    <property type="term" value="F:hexosyltransferase activity"/>
    <property type="evidence" value="ECO:0007669"/>
    <property type="project" value="UniProtKB-ARBA"/>
</dbReference>
<dbReference type="GO" id="GO:0009103">
    <property type="term" value="P:lipopolysaccharide biosynthetic process"/>
    <property type="evidence" value="ECO:0007669"/>
    <property type="project" value="UniProtKB-UniPathway"/>
</dbReference>
<dbReference type="Gene3D" id="3.90.550.10">
    <property type="entry name" value="Spore Coat Polysaccharide Biosynthesis Protein SpsA, Chain A"/>
    <property type="match status" value="1"/>
</dbReference>
<dbReference type="InterPro" id="IPR001173">
    <property type="entry name" value="Glyco_trans_2-like"/>
</dbReference>
<dbReference type="InterPro" id="IPR029044">
    <property type="entry name" value="Nucleotide-diphossugar_trans"/>
</dbReference>
<dbReference type="PANTHER" id="PTHR22916">
    <property type="entry name" value="GLYCOSYLTRANSFERASE"/>
    <property type="match status" value="1"/>
</dbReference>
<dbReference type="PANTHER" id="PTHR22916:SF3">
    <property type="entry name" value="UDP-GLCNAC:BETAGAL BETA-1,3-N-ACETYLGLUCOSAMINYLTRANSFERASE-LIKE PROTEIN 1"/>
    <property type="match status" value="1"/>
</dbReference>
<dbReference type="Pfam" id="PF00535">
    <property type="entry name" value="Glycos_transf_2"/>
    <property type="match status" value="1"/>
</dbReference>
<dbReference type="SUPFAM" id="SSF53448">
    <property type="entry name" value="Nucleotide-diphospho-sugar transferases"/>
    <property type="match status" value="1"/>
</dbReference>
<comment type="function">
    <text evidence="1">Catalyzes the addition of Glc, the second sugar moiety of the O152-antigen repeating unit, to GlcNAc-pyrophosphate-undecaprenol.</text>
</comment>
<comment type="catalytic activity">
    <reaction evidence="1">
        <text>N-acetyl-alpha-D-glucosaminyl-di-trans,octa-cis-undecaprenyl diphosphate + UDP-alpha-D-glucose = beta-D-Glc-(1-&gt;3)-alpha-D-GlcNAc-di-trans,octa-cis-undecaprenyl diphosphate + UDP + H(+)</text>
        <dbReference type="Rhea" id="RHEA:36755"/>
        <dbReference type="ChEBI" id="CHEBI:15378"/>
        <dbReference type="ChEBI" id="CHEBI:58223"/>
        <dbReference type="ChEBI" id="CHEBI:58885"/>
        <dbReference type="ChEBI" id="CHEBI:62959"/>
        <dbReference type="ChEBI" id="CHEBI:73986"/>
        <dbReference type="EC" id="2.4.1.305"/>
    </reaction>
</comment>
<comment type="cofactor">
    <cofactor evidence="1">
        <name>Mn(2+)</name>
        <dbReference type="ChEBI" id="CHEBI:29035"/>
    </cofactor>
    <cofactor evidence="1">
        <name>Mg(2+)</name>
        <dbReference type="ChEBI" id="CHEBI:18420"/>
    </cofactor>
</comment>
<comment type="biophysicochemical properties">
    <kinetics>
        <KM evidence="1">0.14 mM for UDP-Glc</KM>
        <Vmax evidence="1">0.13 umol/h/mg enzyme toward UDP-Glc</Vmax>
    </kinetics>
    <phDependence>
        <text evidence="1">Optimum pH is 6.</text>
    </phDependence>
</comment>
<comment type="pathway">
    <text evidence="1">Bacterial outer membrane biogenesis; lipopolysaccharide biosynthesis.</text>
</comment>
<comment type="subcellular location">
    <subcellularLocation>
        <location evidence="1">Cell inner membrane</location>
        <topology evidence="1">Peripheral membrane protein</topology>
        <orientation evidence="1">Cytoplasmic side</orientation>
    </subcellularLocation>
</comment>
<comment type="similarity">
    <text evidence="2">Belongs to the glycosyltransferase 2 family.</text>
</comment>
<protein>
    <recommendedName>
        <fullName>UDP-Glc:alpha-D-GlcNAc-diphosphoundecaprenol beta-1,3-glucosyltransferase WfgD</fullName>
        <ecNumber>2.4.1.305</ecNumber>
    </recommendedName>
</protein>
<keyword id="KW-0997">Cell inner membrane</keyword>
<keyword id="KW-1003">Cell membrane</keyword>
<keyword id="KW-0328">Glycosyltransferase</keyword>
<keyword id="KW-0448">Lipopolysaccharide biosynthesis</keyword>
<keyword id="KW-0460">Magnesium</keyword>
<keyword id="KW-0464">Manganese</keyword>
<keyword id="KW-0472">Membrane</keyword>
<keyword id="KW-0808">Transferase</keyword>
<sequence length="253" mass="28987">MDDYLVSIIMPSYNAEHTISASISSVLKQTYANWELLVCDDDSSDNTRFKVLEFSDSRIKLLTNEYAKGAAGARNTALKYASGRFIAFLDSDDIWIANKLEMQISMMLKNNISFMYGNYEIINNNSIVGKFVAPQKITYNKLLKNCGIGCLTVVLDRTLLNPFSFPFVHKEDYYLWLSILKDNNISAINCGFICSKYRLSQSSISSNKFKELKRQWDVLGDFVENPLARIYYLLNYIVIGIKKHAFDYKNGKK</sequence>
<reference key="1">
    <citation type="journal article" date="2008" name="FEMS Microbiol. Rev.">
        <title>Structure and genetics of Shigella O antigens.</title>
        <authorList>
            <person name="Liu B."/>
            <person name="Knirel Y.A."/>
            <person name="Feng L."/>
            <person name="Perepelov A.V."/>
            <person name="Senchenkova S.N."/>
            <person name="Wang Q."/>
            <person name="Reeves P.R."/>
            <person name="Wang L."/>
        </authorList>
    </citation>
    <scope>NUCLEOTIDE SEQUENCE [GENOMIC DNA]</scope>
    <source>
        <strain>O152</strain>
    </source>
</reference>
<reference key="2">
    <citation type="journal article" date="2008" name="J. Bacteriol.">
        <title>Characterization of two beta-1,3-glucosyltransferases from Escherichia coli serotypes O56 and O152.</title>
        <authorList>
            <person name="Brockhausen I."/>
            <person name="Hu B."/>
            <person name="Liu B."/>
            <person name="Lau K."/>
            <person name="Szarek W.A."/>
            <person name="Wang L."/>
            <person name="Feng L."/>
        </authorList>
    </citation>
    <scope>FUNCTION</scope>
    <scope>CATALYTIC ACTIVITY</scope>
    <scope>COFACTOR</scope>
    <scope>BIOPHYSICOCHEMICAL PROPERTIES</scope>
    <scope>PATHWAY</scope>
    <scope>SUBCELLULAR LOCATION</scope>
    <source>
        <strain>O152 / G1104</strain>
    </source>
</reference>